<evidence type="ECO:0000250" key="1"/>
<evidence type="ECO:0000305" key="2"/>
<organism>
    <name type="scientific">Dictyostelium discoideum</name>
    <name type="common">Social amoeba</name>
    <dbReference type="NCBI Taxonomy" id="44689"/>
    <lineage>
        <taxon>Eukaryota</taxon>
        <taxon>Amoebozoa</taxon>
        <taxon>Evosea</taxon>
        <taxon>Eumycetozoa</taxon>
        <taxon>Dictyostelia</taxon>
        <taxon>Dictyosteliales</taxon>
        <taxon>Dictyosteliaceae</taxon>
        <taxon>Dictyostelium</taxon>
    </lineage>
</organism>
<name>GSHB_DICDI</name>
<feature type="chain" id="PRO_0000312710" description="Glutathione synthetase">
    <location>
        <begin position="1"/>
        <end position="476"/>
    </location>
</feature>
<feature type="binding site" evidence="1">
    <location>
        <position position="117"/>
    </location>
    <ligand>
        <name>substrate</name>
    </ligand>
</feature>
<feature type="binding site" evidence="1">
    <location>
        <position position="137"/>
    </location>
    <ligand>
        <name>ATP</name>
        <dbReference type="ChEBI" id="CHEBI:30616"/>
    </ligand>
</feature>
<feature type="binding site" evidence="1">
    <location>
        <position position="137"/>
    </location>
    <ligand>
        <name>Mg(2+)</name>
        <dbReference type="ChEBI" id="CHEBI:18420"/>
    </ligand>
</feature>
<feature type="binding site" evidence="1">
    <location>
        <position position="139"/>
    </location>
    <ligand>
        <name>Mg(2+)</name>
        <dbReference type="ChEBI" id="CHEBI:18420"/>
    </ligand>
</feature>
<feature type="binding site" evidence="1">
    <location>
        <begin position="141"/>
        <end position="144"/>
    </location>
    <ligand>
        <name>substrate</name>
    </ligand>
</feature>
<feature type="binding site" evidence="1">
    <location>
        <begin position="211"/>
        <end position="213"/>
    </location>
    <ligand>
        <name>substrate</name>
    </ligand>
</feature>
<feature type="binding site" evidence="1">
    <location>
        <position position="217"/>
    </location>
    <ligand>
        <name>substrate</name>
    </ligand>
</feature>
<feature type="binding site" evidence="1">
    <location>
        <begin position="267"/>
        <end position="270"/>
    </location>
    <ligand>
        <name>substrate</name>
    </ligand>
</feature>
<feature type="binding site" evidence="1">
    <location>
        <position position="308"/>
    </location>
    <ligand>
        <name>ATP</name>
        <dbReference type="ChEBI" id="CHEBI:30616"/>
    </ligand>
</feature>
<feature type="binding site" evidence="1">
    <location>
        <begin position="367"/>
        <end position="376"/>
    </location>
    <ligand>
        <name>ATP</name>
        <dbReference type="ChEBI" id="CHEBI:30616"/>
    </ligand>
</feature>
<feature type="binding site" evidence="1">
    <location>
        <position position="371"/>
    </location>
    <ligand>
        <name>Mg(2+)</name>
        <dbReference type="ChEBI" id="CHEBI:18420"/>
    </ligand>
</feature>
<feature type="binding site" evidence="1">
    <location>
        <position position="378"/>
    </location>
    <ligand>
        <name>ATP</name>
        <dbReference type="ChEBI" id="CHEBI:30616"/>
    </ligand>
</feature>
<feature type="binding site" evidence="1">
    <location>
        <begin position="400"/>
        <end position="403"/>
    </location>
    <ligand>
        <name>ATP</name>
        <dbReference type="ChEBI" id="CHEBI:30616"/>
    </ligand>
</feature>
<feature type="binding site" evidence="1">
    <location>
        <position position="426"/>
    </location>
    <ligand>
        <name>ATP</name>
        <dbReference type="ChEBI" id="CHEBI:30616"/>
    </ligand>
</feature>
<feature type="binding site" evidence="1">
    <location>
        <position position="452"/>
    </location>
    <ligand>
        <name>substrate</name>
    </ligand>
</feature>
<feature type="binding site" evidence="1">
    <location>
        <position position="454"/>
    </location>
    <ligand>
        <name>ATP</name>
        <dbReference type="ChEBI" id="CHEBI:30616"/>
    </ligand>
</feature>
<feature type="binding site" evidence="1">
    <location>
        <position position="460"/>
    </location>
    <ligand>
        <name>ATP</name>
        <dbReference type="ChEBI" id="CHEBI:30616"/>
    </ligand>
</feature>
<feature type="binding site" evidence="1">
    <location>
        <begin position="463"/>
        <end position="464"/>
    </location>
    <ligand>
        <name>substrate</name>
    </ligand>
</feature>
<reference key="1">
    <citation type="journal article" date="2005" name="Nature">
        <title>The genome of the social amoeba Dictyostelium discoideum.</title>
        <authorList>
            <person name="Eichinger L."/>
            <person name="Pachebat J.A."/>
            <person name="Gloeckner G."/>
            <person name="Rajandream M.A."/>
            <person name="Sucgang R."/>
            <person name="Berriman M."/>
            <person name="Song J."/>
            <person name="Olsen R."/>
            <person name="Szafranski K."/>
            <person name="Xu Q."/>
            <person name="Tunggal B."/>
            <person name="Kummerfeld S."/>
            <person name="Madera M."/>
            <person name="Konfortov B.A."/>
            <person name="Rivero F."/>
            <person name="Bankier A.T."/>
            <person name="Lehmann R."/>
            <person name="Hamlin N."/>
            <person name="Davies R."/>
            <person name="Gaudet P."/>
            <person name="Fey P."/>
            <person name="Pilcher K."/>
            <person name="Chen G."/>
            <person name="Saunders D."/>
            <person name="Sodergren E.J."/>
            <person name="Davis P."/>
            <person name="Kerhornou A."/>
            <person name="Nie X."/>
            <person name="Hall N."/>
            <person name="Anjard C."/>
            <person name="Hemphill L."/>
            <person name="Bason N."/>
            <person name="Farbrother P."/>
            <person name="Desany B."/>
            <person name="Just E."/>
            <person name="Morio T."/>
            <person name="Rost R."/>
            <person name="Churcher C.M."/>
            <person name="Cooper J."/>
            <person name="Haydock S."/>
            <person name="van Driessche N."/>
            <person name="Cronin A."/>
            <person name="Goodhead I."/>
            <person name="Muzny D.M."/>
            <person name="Mourier T."/>
            <person name="Pain A."/>
            <person name="Lu M."/>
            <person name="Harper D."/>
            <person name="Lindsay R."/>
            <person name="Hauser H."/>
            <person name="James K.D."/>
            <person name="Quiles M."/>
            <person name="Madan Babu M."/>
            <person name="Saito T."/>
            <person name="Buchrieser C."/>
            <person name="Wardroper A."/>
            <person name="Felder M."/>
            <person name="Thangavelu M."/>
            <person name="Johnson D."/>
            <person name="Knights A."/>
            <person name="Loulseged H."/>
            <person name="Mungall K.L."/>
            <person name="Oliver K."/>
            <person name="Price C."/>
            <person name="Quail M.A."/>
            <person name="Urushihara H."/>
            <person name="Hernandez J."/>
            <person name="Rabbinowitsch E."/>
            <person name="Steffen D."/>
            <person name="Sanders M."/>
            <person name="Ma J."/>
            <person name="Kohara Y."/>
            <person name="Sharp S."/>
            <person name="Simmonds M.N."/>
            <person name="Spiegler S."/>
            <person name="Tivey A."/>
            <person name="Sugano S."/>
            <person name="White B."/>
            <person name="Walker D."/>
            <person name="Woodward J.R."/>
            <person name="Winckler T."/>
            <person name="Tanaka Y."/>
            <person name="Shaulsky G."/>
            <person name="Schleicher M."/>
            <person name="Weinstock G.M."/>
            <person name="Rosenthal A."/>
            <person name="Cox E.C."/>
            <person name="Chisholm R.L."/>
            <person name="Gibbs R.A."/>
            <person name="Loomis W.F."/>
            <person name="Platzer M."/>
            <person name="Kay R.R."/>
            <person name="Williams J.G."/>
            <person name="Dear P.H."/>
            <person name="Noegel A.A."/>
            <person name="Barrell B.G."/>
            <person name="Kuspa A."/>
        </authorList>
    </citation>
    <scope>NUCLEOTIDE SEQUENCE [LARGE SCALE GENOMIC DNA]</scope>
    <source>
        <strain>AX4</strain>
    </source>
</reference>
<keyword id="KW-0067">ATP-binding</keyword>
<keyword id="KW-0317">Glutathione biosynthesis</keyword>
<keyword id="KW-0436">Ligase</keyword>
<keyword id="KW-0460">Magnesium</keyword>
<keyword id="KW-0479">Metal-binding</keyword>
<keyword id="KW-0547">Nucleotide-binding</keyword>
<keyword id="KW-1185">Reference proteome</keyword>
<gene>
    <name type="primary">gshB</name>
    <name type="ORF">DDB_G0291756</name>
</gene>
<accession>Q54E83</accession>
<dbReference type="EC" id="6.3.2.3"/>
<dbReference type="EMBL" id="AAFI02000182">
    <property type="protein sequence ID" value="EAL61574.1"/>
    <property type="molecule type" value="Genomic_DNA"/>
</dbReference>
<dbReference type="RefSeq" id="XP_629979.1">
    <property type="nucleotide sequence ID" value="XM_629977.1"/>
</dbReference>
<dbReference type="SMR" id="Q54E83"/>
<dbReference type="FunCoup" id="Q54E83">
    <property type="interactions" value="839"/>
</dbReference>
<dbReference type="STRING" id="44689.Q54E83"/>
<dbReference type="PaxDb" id="44689-DDB0231404"/>
<dbReference type="EnsemblProtists" id="EAL61574">
    <property type="protein sequence ID" value="EAL61574"/>
    <property type="gene ID" value="DDB_G0291756"/>
</dbReference>
<dbReference type="GeneID" id="8628309"/>
<dbReference type="KEGG" id="ddi:DDB_G0291756"/>
<dbReference type="dictyBase" id="DDB_G0291756">
    <property type="gene designation" value="gshB"/>
</dbReference>
<dbReference type="VEuPathDB" id="AmoebaDB:DDB_G0291756"/>
<dbReference type="eggNOG" id="KOG0021">
    <property type="taxonomic scope" value="Eukaryota"/>
</dbReference>
<dbReference type="HOGENOM" id="CLU_025152_2_1_1"/>
<dbReference type="InParanoid" id="Q54E83"/>
<dbReference type="OMA" id="NGLVMYP"/>
<dbReference type="PhylomeDB" id="Q54E83"/>
<dbReference type="Reactome" id="R-DDI-174403">
    <property type="pathway name" value="Glutathione synthesis and recycling"/>
</dbReference>
<dbReference type="UniPathway" id="UPA00142">
    <property type="reaction ID" value="UER00210"/>
</dbReference>
<dbReference type="PRO" id="PR:Q54E83"/>
<dbReference type="Proteomes" id="UP000002195">
    <property type="component" value="Chromosome 6"/>
</dbReference>
<dbReference type="GO" id="GO:0005829">
    <property type="term" value="C:cytosol"/>
    <property type="evidence" value="ECO:0000318"/>
    <property type="project" value="GO_Central"/>
</dbReference>
<dbReference type="GO" id="GO:0005524">
    <property type="term" value="F:ATP binding"/>
    <property type="evidence" value="ECO:0000250"/>
    <property type="project" value="UniProtKB"/>
</dbReference>
<dbReference type="GO" id="GO:0043295">
    <property type="term" value="F:glutathione binding"/>
    <property type="evidence" value="ECO:0000250"/>
    <property type="project" value="UniProtKB"/>
</dbReference>
<dbReference type="GO" id="GO:0004363">
    <property type="term" value="F:glutathione synthase activity"/>
    <property type="evidence" value="ECO:0000250"/>
    <property type="project" value="dictyBase"/>
</dbReference>
<dbReference type="GO" id="GO:0000287">
    <property type="term" value="F:magnesium ion binding"/>
    <property type="evidence" value="ECO:0000250"/>
    <property type="project" value="UniProtKB"/>
</dbReference>
<dbReference type="GO" id="GO:0006750">
    <property type="term" value="P:glutathione biosynthetic process"/>
    <property type="evidence" value="ECO:0000250"/>
    <property type="project" value="dictyBase"/>
</dbReference>
<dbReference type="FunFam" id="3.30.1490.50:FF:000002">
    <property type="entry name" value="Glutathione synthetase"/>
    <property type="match status" value="1"/>
</dbReference>
<dbReference type="FunFam" id="3.40.50.1760:FF:000001">
    <property type="entry name" value="Glutathione synthetase"/>
    <property type="match status" value="1"/>
</dbReference>
<dbReference type="Gene3D" id="3.30.1490.50">
    <property type="match status" value="1"/>
</dbReference>
<dbReference type="Gene3D" id="3.30.1490.80">
    <property type="match status" value="1"/>
</dbReference>
<dbReference type="Gene3D" id="3.30.470.20">
    <property type="entry name" value="ATP-grasp fold, B domain"/>
    <property type="match status" value="1"/>
</dbReference>
<dbReference type="Gene3D" id="3.40.50.1760">
    <property type="entry name" value="Glutathione synthase, substrate-binding domain superfamily, eukaryotic"/>
    <property type="match status" value="1"/>
</dbReference>
<dbReference type="Gene3D" id="1.10.1080.10">
    <property type="entry name" value="Glutathione Synthetase, Chain A, domain 3"/>
    <property type="match status" value="1"/>
</dbReference>
<dbReference type="InterPro" id="IPR005615">
    <property type="entry name" value="Glutathione_synthase"/>
</dbReference>
<dbReference type="InterPro" id="IPR014042">
    <property type="entry name" value="Glutathione_synthase_a-hlx"/>
</dbReference>
<dbReference type="InterPro" id="IPR014709">
    <property type="entry name" value="Glutathione_synthase_C_euk"/>
</dbReference>
<dbReference type="InterPro" id="IPR014049">
    <property type="entry name" value="Glutathione_synthase_N_euk"/>
</dbReference>
<dbReference type="InterPro" id="IPR037013">
    <property type="entry name" value="GSH-S_sub-bd_sf"/>
</dbReference>
<dbReference type="InterPro" id="IPR004887">
    <property type="entry name" value="GSH_synth_subst-bd"/>
</dbReference>
<dbReference type="InterPro" id="IPR016185">
    <property type="entry name" value="PreATP-grasp_dom_sf"/>
</dbReference>
<dbReference type="NCBIfam" id="TIGR01986">
    <property type="entry name" value="glut_syn_euk"/>
    <property type="match status" value="1"/>
</dbReference>
<dbReference type="PANTHER" id="PTHR11130">
    <property type="entry name" value="GLUTATHIONE SYNTHETASE"/>
    <property type="match status" value="1"/>
</dbReference>
<dbReference type="PANTHER" id="PTHR11130:SF0">
    <property type="entry name" value="GLUTATHIONE SYNTHETASE"/>
    <property type="match status" value="1"/>
</dbReference>
<dbReference type="Pfam" id="PF03917">
    <property type="entry name" value="GSH_synth_ATP"/>
    <property type="match status" value="1"/>
</dbReference>
<dbReference type="Pfam" id="PF03199">
    <property type="entry name" value="GSH_synthase"/>
    <property type="match status" value="1"/>
</dbReference>
<dbReference type="PIRSF" id="PIRSF001558">
    <property type="entry name" value="GSHase"/>
    <property type="match status" value="1"/>
</dbReference>
<dbReference type="SUPFAM" id="SSF56059">
    <property type="entry name" value="Glutathione synthetase ATP-binding domain-like"/>
    <property type="match status" value="1"/>
</dbReference>
<dbReference type="SUPFAM" id="SSF52440">
    <property type="entry name" value="PreATP-grasp domain"/>
    <property type="match status" value="1"/>
</dbReference>
<comment type="catalytic activity">
    <reaction>
        <text>gamma-L-glutamyl-L-cysteine + glycine + ATP = glutathione + ADP + phosphate + H(+)</text>
        <dbReference type="Rhea" id="RHEA:13557"/>
        <dbReference type="ChEBI" id="CHEBI:15378"/>
        <dbReference type="ChEBI" id="CHEBI:30616"/>
        <dbReference type="ChEBI" id="CHEBI:43474"/>
        <dbReference type="ChEBI" id="CHEBI:57305"/>
        <dbReference type="ChEBI" id="CHEBI:57925"/>
        <dbReference type="ChEBI" id="CHEBI:58173"/>
        <dbReference type="ChEBI" id="CHEBI:456216"/>
        <dbReference type="EC" id="6.3.2.3"/>
    </reaction>
</comment>
<comment type="cofactor">
    <cofactor evidence="1">
        <name>Mg(2+)</name>
        <dbReference type="ChEBI" id="CHEBI:18420"/>
    </cofactor>
    <text evidence="1">Binds 1 Mg(2+) ion per subunit.</text>
</comment>
<comment type="pathway">
    <text>Sulfur metabolism; glutathione biosynthesis; glutathione from L-cysteine and L-glutamate: step 2/2.</text>
</comment>
<comment type="subunit">
    <text evidence="1">Homodimer.</text>
</comment>
<comment type="similarity">
    <text evidence="2">Belongs to the eukaryotic GSH synthase family.</text>
</comment>
<sequence>MEEKLNDLKEQGIDWAFANGLIMIKKPTEEEAKNNVVNVTHVPFSLYPSKMNKKLFNEACKLAEDYNLLVHNISKDYDFLQNTLKDVFDDFTQMLLNIQRKVVKEGIKQKISLGIFRSDYMFHNKIEGEEERIYQVELNTISSSLAVVSNRVFNLHKYLIGRNDLNDNGYDLLNHPTNQSDKEISDSIALAHKLYNKEKSSVVLMIIQEGERNIYDQKGLEFQLWSNHSIKLIRRTMKEINQCAKLDEENGSVLIVDGMEISVAYYRAGYTPNDYTSSGGDEWKARLLIERSLAIKCPTIAHHLVGVKKIQQVLAQPGVLEKFINNDKESLQRVKRSFTGLYSLSKEDIDMSVVKEAIESPQNYVMKPQREGGGNNIYNDQVAIALKSMSSEELSSYILMDKIMSKSFKTHVVRDRQLLEIEGLYELGIYSVFISNGDDDIVLNKQAGILLRTKTANSDEVGVAAGFGLLDSPILE</sequence>
<proteinExistence type="inferred from homology"/>
<protein>
    <recommendedName>
        <fullName>Glutathione synthetase</fullName>
        <shortName>GSH synthetase</shortName>
        <shortName>GSH-S</shortName>
        <ecNumber>6.3.2.3</ecNumber>
    </recommendedName>
    <alternativeName>
        <fullName>Glutathione synthase</fullName>
    </alternativeName>
</protein>